<keyword id="KW-0963">Cytoplasm</keyword>
<keyword id="KW-0489">Methyltransferase</keyword>
<keyword id="KW-1185">Reference proteome</keyword>
<keyword id="KW-0694">RNA-binding</keyword>
<keyword id="KW-0698">rRNA processing</keyword>
<keyword id="KW-0949">S-adenosyl-L-methionine</keyword>
<keyword id="KW-0808">Transferase</keyword>
<reference key="1">
    <citation type="journal article" date="1996" name="DNA Res.">
        <title>Sequence analysis of the genome of the unicellular cyanobacterium Synechocystis sp. strain PCC6803. II. Sequence determination of the entire genome and assignment of potential protein-coding regions.</title>
        <authorList>
            <person name="Kaneko T."/>
            <person name="Sato S."/>
            <person name="Kotani H."/>
            <person name="Tanaka A."/>
            <person name="Asamizu E."/>
            <person name="Nakamura Y."/>
            <person name="Miyajima N."/>
            <person name="Hirosawa M."/>
            <person name="Sugiura M."/>
            <person name="Sasamoto S."/>
            <person name="Kimura T."/>
            <person name="Hosouchi T."/>
            <person name="Matsuno A."/>
            <person name="Muraki A."/>
            <person name="Nakazaki N."/>
            <person name="Naruo K."/>
            <person name="Okumura S."/>
            <person name="Shimpo S."/>
            <person name="Takeuchi C."/>
            <person name="Wada T."/>
            <person name="Watanabe A."/>
            <person name="Yamada M."/>
            <person name="Yasuda M."/>
            <person name="Tabata S."/>
        </authorList>
    </citation>
    <scope>NUCLEOTIDE SEQUENCE [LARGE SCALE GENOMIC DNA]</scope>
    <source>
        <strain>ATCC 27184 / PCC 6803 / Kazusa</strain>
    </source>
</reference>
<proteinExistence type="inferred from homology"/>
<feature type="chain" id="PRO_0000101628" description="Ribosomal RNA small subunit methyltransferase A">
    <location>
        <begin position="1"/>
        <end position="284"/>
    </location>
</feature>
<feature type="binding site" evidence="1">
    <location>
        <position position="12"/>
    </location>
    <ligand>
        <name>S-adenosyl-L-methionine</name>
        <dbReference type="ChEBI" id="CHEBI:59789"/>
    </ligand>
</feature>
<feature type="binding site" evidence="1">
    <location>
        <position position="14"/>
    </location>
    <ligand>
        <name>S-adenosyl-L-methionine</name>
        <dbReference type="ChEBI" id="CHEBI:59789"/>
    </ligand>
</feature>
<feature type="binding site" evidence="1">
    <location>
        <position position="47"/>
    </location>
    <ligand>
        <name>S-adenosyl-L-methionine</name>
        <dbReference type="ChEBI" id="CHEBI:59789"/>
    </ligand>
</feature>
<feature type="binding site" evidence="1">
    <location>
        <position position="68"/>
    </location>
    <ligand>
        <name>S-adenosyl-L-methionine</name>
        <dbReference type="ChEBI" id="CHEBI:59789"/>
    </ligand>
</feature>
<feature type="binding site" evidence="1">
    <location>
        <position position="93"/>
    </location>
    <ligand>
        <name>S-adenosyl-L-methionine</name>
        <dbReference type="ChEBI" id="CHEBI:59789"/>
    </ligand>
</feature>
<feature type="binding site" evidence="1">
    <location>
        <position position="118"/>
    </location>
    <ligand>
        <name>S-adenosyl-L-methionine</name>
        <dbReference type="ChEBI" id="CHEBI:59789"/>
    </ligand>
</feature>
<evidence type="ECO:0000255" key="1">
    <source>
        <dbReference type="HAMAP-Rule" id="MF_00607"/>
    </source>
</evidence>
<sequence>MAFRPRKRFGQHWLNHEPTLQAIVAAADIQSGAPQSGSLRDRLLEIGPGMGVLTKQLLATGNPVVAVELDRDLCLKLRKKLGQRENFLLLEGDVLILDLNALLQDFPQFSPLNKVVANIPYNITSPILELLLGTIQKPRVPGFETIVLLVQKEIAERLTAQPSTKAYGALSVRMQYLARVDWIVDVPPKAFTPPPKVDSAVIRLTPYPVEQLPGDRRLLDQLLCLGFANRRKMLRNNLKGLIAPEQLTTLLEQLALPSTARAEDLSLEQWLELTNLLPTFLPPT</sequence>
<protein>
    <recommendedName>
        <fullName evidence="1">Ribosomal RNA small subunit methyltransferase A</fullName>
        <ecNumber evidence="1">2.1.1.182</ecNumber>
    </recommendedName>
    <alternativeName>
        <fullName evidence="1">16S rRNA (adenine(1518)-N(6)/adenine(1519)-N(6))-dimethyltransferase</fullName>
    </alternativeName>
    <alternativeName>
        <fullName evidence="1">16S rRNA dimethyladenosine transferase</fullName>
    </alternativeName>
    <alternativeName>
        <fullName evidence="1">16S rRNA dimethylase</fullName>
    </alternativeName>
    <alternativeName>
        <fullName evidence="1">S-adenosylmethionine-6-N', N'-adenosyl(rRNA) dimethyltransferase</fullName>
    </alternativeName>
</protein>
<accession>P72666</accession>
<organism>
    <name type="scientific">Synechocystis sp. (strain ATCC 27184 / PCC 6803 / Kazusa)</name>
    <dbReference type="NCBI Taxonomy" id="1111708"/>
    <lineage>
        <taxon>Bacteria</taxon>
        <taxon>Bacillati</taxon>
        <taxon>Cyanobacteriota</taxon>
        <taxon>Cyanophyceae</taxon>
        <taxon>Synechococcales</taxon>
        <taxon>Merismopediaceae</taxon>
        <taxon>Synechocystis</taxon>
    </lineage>
</organism>
<gene>
    <name evidence="1" type="primary">rsmA</name>
    <name evidence="1" type="synonym">ksgA</name>
    <name type="ordered locus">sll0708</name>
</gene>
<name>RSMA_SYNY3</name>
<dbReference type="EC" id="2.1.1.182" evidence="1"/>
<dbReference type="EMBL" id="BA000022">
    <property type="protein sequence ID" value="BAA16668.1"/>
    <property type="molecule type" value="Genomic_DNA"/>
</dbReference>
<dbReference type="PIR" id="S74516">
    <property type="entry name" value="S74516"/>
</dbReference>
<dbReference type="SMR" id="P72666"/>
<dbReference type="FunCoup" id="P72666">
    <property type="interactions" value="422"/>
</dbReference>
<dbReference type="IntAct" id="P72666">
    <property type="interactions" value="1"/>
</dbReference>
<dbReference type="STRING" id="1148.gene:10497523"/>
<dbReference type="PaxDb" id="1148-1651740"/>
<dbReference type="EnsemblBacteria" id="BAA16668">
    <property type="protein sequence ID" value="BAA16668"/>
    <property type="gene ID" value="BAA16668"/>
</dbReference>
<dbReference type="KEGG" id="syn:sll0708"/>
<dbReference type="eggNOG" id="COG0030">
    <property type="taxonomic scope" value="Bacteria"/>
</dbReference>
<dbReference type="InParanoid" id="P72666"/>
<dbReference type="PhylomeDB" id="P72666"/>
<dbReference type="Proteomes" id="UP000001425">
    <property type="component" value="Chromosome"/>
</dbReference>
<dbReference type="GO" id="GO:0005829">
    <property type="term" value="C:cytosol"/>
    <property type="evidence" value="ECO:0000318"/>
    <property type="project" value="GO_Central"/>
</dbReference>
<dbReference type="GO" id="GO:0052908">
    <property type="term" value="F:16S rRNA (adenine(1518)-N(6)/adenine(1519)-N(6))-dimethyltransferase activity"/>
    <property type="evidence" value="ECO:0007669"/>
    <property type="project" value="UniProtKB-EC"/>
</dbReference>
<dbReference type="GO" id="GO:0003723">
    <property type="term" value="F:RNA binding"/>
    <property type="evidence" value="ECO:0007669"/>
    <property type="project" value="UniProtKB-KW"/>
</dbReference>
<dbReference type="GO" id="GO:0000179">
    <property type="term" value="F:rRNA (adenine-N6,N6-)-dimethyltransferase activity"/>
    <property type="evidence" value="ECO:0000318"/>
    <property type="project" value="GO_Central"/>
</dbReference>
<dbReference type="GO" id="GO:0031167">
    <property type="term" value="P:rRNA methylation"/>
    <property type="evidence" value="ECO:0000318"/>
    <property type="project" value="GO_Central"/>
</dbReference>
<dbReference type="FunFam" id="3.40.50.150:FF:000023">
    <property type="entry name" value="Ribosomal RNA small subunit methyltransferase A"/>
    <property type="match status" value="1"/>
</dbReference>
<dbReference type="Gene3D" id="1.10.8.100">
    <property type="entry name" value="Ribosomal RNA adenine dimethylase-like, domain 2"/>
    <property type="match status" value="1"/>
</dbReference>
<dbReference type="Gene3D" id="3.40.50.150">
    <property type="entry name" value="Vaccinia Virus protein VP39"/>
    <property type="match status" value="1"/>
</dbReference>
<dbReference type="HAMAP" id="MF_00607">
    <property type="entry name" value="16SrRNA_methyltr_A"/>
    <property type="match status" value="1"/>
</dbReference>
<dbReference type="InterPro" id="IPR001737">
    <property type="entry name" value="KsgA/Erm"/>
</dbReference>
<dbReference type="InterPro" id="IPR023165">
    <property type="entry name" value="rRNA_Ade_diMease-like_C"/>
</dbReference>
<dbReference type="InterPro" id="IPR020596">
    <property type="entry name" value="rRNA_Ade_Mease_Trfase_CS"/>
</dbReference>
<dbReference type="InterPro" id="IPR020598">
    <property type="entry name" value="rRNA_Ade_methylase_Trfase_N"/>
</dbReference>
<dbReference type="InterPro" id="IPR011530">
    <property type="entry name" value="rRNA_adenine_dimethylase"/>
</dbReference>
<dbReference type="InterPro" id="IPR029063">
    <property type="entry name" value="SAM-dependent_MTases_sf"/>
</dbReference>
<dbReference type="NCBIfam" id="TIGR00755">
    <property type="entry name" value="ksgA"/>
    <property type="match status" value="1"/>
</dbReference>
<dbReference type="PANTHER" id="PTHR11727">
    <property type="entry name" value="DIMETHYLADENOSINE TRANSFERASE"/>
    <property type="match status" value="1"/>
</dbReference>
<dbReference type="PANTHER" id="PTHR11727:SF7">
    <property type="entry name" value="DIMETHYLADENOSINE TRANSFERASE-RELATED"/>
    <property type="match status" value="1"/>
</dbReference>
<dbReference type="Pfam" id="PF00398">
    <property type="entry name" value="RrnaAD"/>
    <property type="match status" value="1"/>
</dbReference>
<dbReference type="SMART" id="SM00650">
    <property type="entry name" value="rADc"/>
    <property type="match status" value="1"/>
</dbReference>
<dbReference type="SUPFAM" id="SSF53335">
    <property type="entry name" value="S-adenosyl-L-methionine-dependent methyltransferases"/>
    <property type="match status" value="1"/>
</dbReference>
<dbReference type="PROSITE" id="PS01131">
    <property type="entry name" value="RRNA_A_DIMETH"/>
    <property type="match status" value="1"/>
</dbReference>
<dbReference type="PROSITE" id="PS51689">
    <property type="entry name" value="SAM_RNA_A_N6_MT"/>
    <property type="match status" value="1"/>
</dbReference>
<comment type="function">
    <text evidence="1">Specifically dimethylates two adjacent adenosines (A1518 and A1519) in the loop of a conserved hairpin near the 3'-end of 16S rRNA in the 30S particle. May play a critical role in biogenesis of 30S subunits.</text>
</comment>
<comment type="catalytic activity">
    <reaction evidence="1">
        <text>adenosine(1518)/adenosine(1519) in 16S rRNA + 4 S-adenosyl-L-methionine = N(6)-dimethyladenosine(1518)/N(6)-dimethyladenosine(1519) in 16S rRNA + 4 S-adenosyl-L-homocysteine + 4 H(+)</text>
        <dbReference type="Rhea" id="RHEA:19609"/>
        <dbReference type="Rhea" id="RHEA-COMP:10232"/>
        <dbReference type="Rhea" id="RHEA-COMP:10233"/>
        <dbReference type="ChEBI" id="CHEBI:15378"/>
        <dbReference type="ChEBI" id="CHEBI:57856"/>
        <dbReference type="ChEBI" id="CHEBI:59789"/>
        <dbReference type="ChEBI" id="CHEBI:74411"/>
        <dbReference type="ChEBI" id="CHEBI:74493"/>
        <dbReference type="EC" id="2.1.1.182"/>
    </reaction>
</comment>
<comment type="subcellular location">
    <subcellularLocation>
        <location evidence="1">Cytoplasm</location>
    </subcellularLocation>
</comment>
<comment type="similarity">
    <text evidence="1">Belongs to the class I-like SAM-binding methyltransferase superfamily. rRNA adenine N(6)-methyltransferase family. RsmA subfamily.</text>
</comment>